<dbReference type="EC" id="6.3.2.8" evidence="1"/>
<dbReference type="EMBL" id="AE004092">
    <property type="protein sequence ID" value="AAK33396.1"/>
    <property type="molecule type" value="Genomic_DNA"/>
</dbReference>
<dbReference type="EMBL" id="CP000017">
    <property type="protein sequence ID" value="AAZ50909.1"/>
    <property type="molecule type" value="Genomic_DNA"/>
</dbReference>
<dbReference type="RefSeq" id="NP_268675.1">
    <property type="nucleotide sequence ID" value="NC_002737.2"/>
</dbReference>
<dbReference type="SMR" id="Q9A1C7"/>
<dbReference type="PaxDb" id="1314-HKU360_00329"/>
<dbReference type="KEGG" id="spy:SPy_0345"/>
<dbReference type="KEGG" id="spz:M5005_Spy0290"/>
<dbReference type="PATRIC" id="fig|160490.10.peg.297"/>
<dbReference type="HOGENOM" id="CLU_028104_1_0_9"/>
<dbReference type="OMA" id="DITYQLR"/>
<dbReference type="UniPathway" id="UPA00219"/>
<dbReference type="Proteomes" id="UP000000750">
    <property type="component" value="Chromosome"/>
</dbReference>
<dbReference type="GO" id="GO:0005737">
    <property type="term" value="C:cytoplasm"/>
    <property type="evidence" value="ECO:0007669"/>
    <property type="project" value="UniProtKB-SubCell"/>
</dbReference>
<dbReference type="GO" id="GO:0005524">
    <property type="term" value="F:ATP binding"/>
    <property type="evidence" value="ECO:0007669"/>
    <property type="project" value="UniProtKB-UniRule"/>
</dbReference>
<dbReference type="GO" id="GO:0008763">
    <property type="term" value="F:UDP-N-acetylmuramate-L-alanine ligase activity"/>
    <property type="evidence" value="ECO:0007669"/>
    <property type="project" value="UniProtKB-UniRule"/>
</dbReference>
<dbReference type="GO" id="GO:0051301">
    <property type="term" value="P:cell division"/>
    <property type="evidence" value="ECO:0007669"/>
    <property type="project" value="UniProtKB-KW"/>
</dbReference>
<dbReference type="GO" id="GO:0071555">
    <property type="term" value="P:cell wall organization"/>
    <property type="evidence" value="ECO:0007669"/>
    <property type="project" value="UniProtKB-KW"/>
</dbReference>
<dbReference type="GO" id="GO:0009252">
    <property type="term" value="P:peptidoglycan biosynthetic process"/>
    <property type="evidence" value="ECO:0007669"/>
    <property type="project" value="UniProtKB-UniRule"/>
</dbReference>
<dbReference type="GO" id="GO:0008360">
    <property type="term" value="P:regulation of cell shape"/>
    <property type="evidence" value="ECO:0007669"/>
    <property type="project" value="UniProtKB-KW"/>
</dbReference>
<dbReference type="Gene3D" id="3.90.190.20">
    <property type="entry name" value="Mur ligase, C-terminal domain"/>
    <property type="match status" value="1"/>
</dbReference>
<dbReference type="Gene3D" id="3.40.1190.10">
    <property type="entry name" value="Mur-like, catalytic domain"/>
    <property type="match status" value="1"/>
</dbReference>
<dbReference type="Gene3D" id="3.40.50.720">
    <property type="entry name" value="NAD(P)-binding Rossmann-like Domain"/>
    <property type="match status" value="1"/>
</dbReference>
<dbReference type="HAMAP" id="MF_00046">
    <property type="entry name" value="MurC"/>
    <property type="match status" value="1"/>
</dbReference>
<dbReference type="InterPro" id="IPR036565">
    <property type="entry name" value="Mur-like_cat_sf"/>
</dbReference>
<dbReference type="InterPro" id="IPR004101">
    <property type="entry name" value="Mur_ligase_C"/>
</dbReference>
<dbReference type="InterPro" id="IPR036615">
    <property type="entry name" value="Mur_ligase_C_dom_sf"/>
</dbReference>
<dbReference type="InterPro" id="IPR013221">
    <property type="entry name" value="Mur_ligase_cen"/>
</dbReference>
<dbReference type="InterPro" id="IPR000713">
    <property type="entry name" value="Mur_ligase_N"/>
</dbReference>
<dbReference type="InterPro" id="IPR050061">
    <property type="entry name" value="MurCDEF_pg_biosynth"/>
</dbReference>
<dbReference type="InterPro" id="IPR005758">
    <property type="entry name" value="UDP-N-AcMur_Ala_ligase_MurC"/>
</dbReference>
<dbReference type="NCBIfam" id="TIGR01082">
    <property type="entry name" value="murC"/>
    <property type="match status" value="1"/>
</dbReference>
<dbReference type="PANTHER" id="PTHR43445:SF3">
    <property type="entry name" value="UDP-N-ACETYLMURAMATE--L-ALANINE LIGASE"/>
    <property type="match status" value="1"/>
</dbReference>
<dbReference type="PANTHER" id="PTHR43445">
    <property type="entry name" value="UDP-N-ACETYLMURAMATE--L-ALANINE LIGASE-RELATED"/>
    <property type="match status" value="1"/>
</dbReference>
<dbReference type="Pfam" id="PF01225">
    <property type="entry name" value="Mur_ligase"/>
    <property type="match status" value="1"/>
</dbReference>
<dbReference type="Pfam" id="PF02875">
    <property type="entry name" value="Mur_ligase_C"/>
    <property type="match status" value="1"/>
</dbReference>
<dbReference type="Pfam" id="PF08245">
    <property type="entry name" value="Mur_ligase_M"/>
    <property type="match status" value="1"/>
</dbReference>
<dbReference type="SUPFAM" id="SSF51984">
    <property type="entry name" value="MurCD N-terminal domain"/>
    <property type="match status" value="1"/>
</dbReference>
<dbReference type="SUPFAM" id="SSF53623">
    <property type="entry name" value="MurD-like peptide ligases, catalytic domain"/>
    <property type="match status" value="1"/>
</dbReference>
<dbReference type="SUPFAM" id="SSF53244">
    <property type="entry name" value="MurD-like peptide ligases, peptide-binding domain"/>
    <property type="match status" value="1"/>
</dbReference>
<name>MURC_STRP1</name>
<proteinExistence type="inferred from homology"/>
<comment type="function">
    <text evidence="1">Cell wall formation.</text>
</comment>
<comment type="catalytic activity">
    <reaction evidence="1">
        <text>UDP-N-acetyl-alpha-D-muramate + L-alanine + ATP = UDP-N-acetyl-alpha-D-muramoyl-L-alanine + ADP + phosphate + H(+)</text>
        <dbReference type="Rhea" id="RHEA:23372"/>
        <dbReference type="ChEBI" id="CHEBI:15378"/>
        <dbReference type="ChEBI" id="CHEBI:30616"/>
        <dbReference type="ChEBI" id="CHEBI:43474"/>
        <dbReference type="ChEBI" id="CHEBI:57972"/>
        <dbReference type="ChEBI" id="CHEBI:70757"/>
        <dbReference type="ChEBI" id="CHEBI:83898"/>
        <dbReference type="ChEBI" id="CHEBI:456216"/>
        <dbReference type="EC" id="6.3.2.8"/>
    </reaction>
</comment>
<comment type="pathway">
    <text evidence="1">Cell wall biogenesis; peptidoglycan biosynthesis.</text>
</comment>
<comment type="subcellular location">
    <subcellularLocation>
        <location evidence="1">Cytoplasm</location>
    </subcellularLocation>
</comment>
<comment type="similarity">
    <text evidence="1">Belongs to the MurCDEF family.</text>
</comment>
<feature type="chain" id="PRO_0000182168" description="UDP-N-acetylmuramate--L-alanine ligase">
    <location>
        <begin position="1"/>
        <end position="442"/>
    </location>
</feature>
<feature type="binding site" evidence="1">
    <location>
        <begin position="109"/>
        <end position="115"/>
    </location>
    <ligand>
        <name>ATP</name>
        <dbReference type="ChEBI" id="CHEBI:30616"/>
    </ligand>
</feature>
<evidence type="ECO:0000255" key="1">
    <source>
        <dbReference type="HAMAP-Rule" id="MF_00046"/>
    </source>
</evidence>
<keyword id="KW-0067">ATP-binding</keyword>
<keyword id="KW-0131">Cell cycle</keyword>
<keyword id="KW-0132">Cell division</keyword>
<keyword id="KW-0133">Cell shape</keyword>
<keyword id="KW-0961">Cell wall biogenesis/degradation</keyword>
<keyword id="KW-0963">Cytoplasm</keyword>
<keyword id="KW-0436">Ligase</keyword>
<keyword id="KW-0547">Nucleotide-binding</keyword>
<keyword id="KW-0573">Peptidoglycan synthesis</keyword>
<keyword id="KW-1185">Reference proteome</keyword>
<gene>
    <name evidence="1" type="primary">murC</name>
    <name type="ordered locus">SPy_0345</name>
    <name type="ordered locus">M5005_Spy0290</name>
</gene>
<reference key="1">
    <citation type="journal article" date="2001" name="Proc. Natl. Acad. Sci. U.S.A.">
        <title>Complete genome sequence of an M1 strain of Streptococcus pyogenes.</title>
        <authorList>
            <person name="Ferretti J.J."/>
            <person name="McShan W.M."/>
            <person name="Ajdic D.J."/>
            <person name="Savic D.J."/>
            <person name="Savic G."/>
            <person name="Lyon K."/>
            <person name="Primeaux C."/>
            <person name="Sezate S."/>
            <person name="Suvorov A.N."/>
            <person name="Kenton S."/>
            <person name="Lai H.S."/>
            <person name="Lin S.P."/>
            <person name="Qian Y."/>
            <person name="Jia H.G."/>
            <person name="Najar F.Z."/>
            <person name="Ren Q."/>
            <person name="Zhu H."/>
            <person name="Song L."/>
            <person name="White J."/>
            <person name="Yuan X."/>
            <person name="Clifton S.W."/>
            <person name="Roe B.A."/>
            <person name="McLaughlin R.E."/>
        </authorList>
    </citation>
    <scope>NUCLEOTIDE SEQUENCE [LARGE SCALE GENOMIC DNA]</scope>
    <source>
        <strain>ATCC 700294 / SF370 / Serotype M1</strain>
    </source>
</reference>
<reference key="2">
    <citation type="journal article" date="2005" name="J. Infect. Dis.">
        <title>Evolutionary origin and emergence of a highly successful clone of serotype M1 group A Streptococcus involved multiple horizontal gene transfer events.</title>
        <authorList>
            <person name="Sumby P."/>
            <person name="Porcella S.F."/>
            <person name="Madrigal A.G."/>
            <person name="Barbian K.D."/>
            <person name="Virtaneva K."/>
            <person name="Ricklefs S.M."/>
            <person name="Sturdevant D.E."/>
            <person name="Graham M.R."/>
            <person name="Vuopio-Varkila J."/>
            <person name="Hoe N.P."/>
            <person name="Musser J.M."/>
        </authorList>
    </citation>
    <scope>NUCLEOTIDE SEQUENCE [LARGE SCALE GENOMIC DNA]</scope>
    <source>
        <strain>ATCC BAA-947 / MGAS5005 / Serotype M1</strain>
    </source>
</reference>
<protein>
    <recommendedName>
        <fullName evidence="1">UDP-N-acetylmuramate--L-alanine ligase</fullName>
        <ecNumber evidence="1">6.3.2.8</ecNumber>
    </recommendedName>
    <alternativeName>
        <fullName evidence="1">UDP-N-acetylmuramoyl-L-alanine synthetase</fullName>
    </alternativeName>
</protein>
<sequence length="442" mass="49594">MSKTYHFIGIKGSGMSALALMLHQMGHKVQGSDVEKYYFTQRGLEQAGITILPFSEDNITPDMELIVGNAFRENNKEVAYALRHQIPFKRYHDFLGDFMKSFISFAVAGAHGKTSTTGLLSHVLKNITDTSYLIGDGTGRGSANAQYFVFESDEYERHFMPYHPEYSIITNIDFDHPDYFTGIADVRNAFNDYAKQVKKALFVYGEDDELKKIEAPAPIYYYGFEEGNDFIAYDITRTTNGSDFKVKHQGEVIGQFHVPAYGKHNILNATAVIANLFVAGIDMALVADHLKTFSGVKRRFTEKIINDTIIIDDFAHHPTEIVATIDAARQKYPSKEIVAIFQPHTFTRTIALLEDFACALNEADSVYLAQIYGSAREVDKGEVKVEDLAAKIIKPSQVVTVENVSPLLDHDNAVYVFMGAGDIQLYEHSFEELLANLTKNNQ</sequence>
<accession>Q9A1C7</accession>
<accession>Q490Q9</accession>
<organism>
    <name type="scientific">Streptococcus pyogenes serotype M1</name>
    <dbReference type="NCBI Taxonomy" id="301447"/>
    <lineage>
        <taxon>Bacteria</taxon>
        <taxon>Bacillati</taxon>
        <taxon>Bacillota</taxon>
        <taxon>Bacilli</taxon>
        <taxon>Lactobacillales</taxon>
        <taxon>Streptococcaceae</taxon>
        <taxon>Streptococcus</taxon>
    </lineage>
</organism>